<feature type="chain" id="PRO_0000386753" description="Ribosomal RNA small subunit methyltransferase H">
    <location>
        <begin position="1"/>
        <end position="297"/>
    </location>
</feature>
<feature type="binding site" evidence="1">
    <location>
        <begin position="37"/>
        <end position="39"/>
    </location>
    <ligand>
        <name>S-adenosyl-L-methionine</name>
        <dbReference type="ChEBI" id="CHEBI:59789"/>
    </ligand>
</feature>
<feature type="binding site" evidence="1">
    <location>
        <position position="56"/>
    </location>
    <ligand>
        <name>S-adenosyl-L-methionine</name>
        <dbReference type="ChEBI" id="CHEBI:59789"/>
    </ligand>
</feature>
<feature type="binding site" evidence="1">
    <location>
        <position position="87"/>
    </location>
    <ligand>
        <name>S-adenosyl-L-methionine</name>
        <dbReference type="ChEBI" id="CHEBI:59789"/>
    </ligand>
</feature>
<feature type="binding site" evidence="1">
    <location>
        <position position="102"/>
    </location>
    <ligand>
        <name>S-adenosyl-L-methionine</name>
        <dbReference type="ChEBI" id="CHEBI:59789"/>
    </ligand>
</feature>
<feature type="binding site" evidence="1">
    <location>
        <position position="109"/>
    </location>
    <ligand>
        <name>S-adenosyl-L-methionine</name>
        <dbReference type="ChEBI" id="CHEBI:59789"/>
    </ligand>
</feature>
<dbReference type="EC" id="2.1.1.199" evidence="1"/>
<dbReference type="EMBL" id="CP000976">
    <property type="protein sequence ID" value="ACH93261.1"/>
    <property type="molecule type" value="Genomic_DNA"/>
</dbReference>
<dbReference type="RefSeq" id="WP_012538072.1">
    <property type="nucleotide sequence ID" value="NC_011229.1"/>
</dbReference>
<dbReference type="SMR" id="B5RLD2"/>
<dbReference type="STRING" id="412419.BDU_309"/>
<dbReference type="KEGG" id="bdu:BDU_309"/>
<dbReference type="eggNOG" id="COG0275">
    <property type="taxonomic scope" value="Bacteria"/>
</dbReference>
<dbReference type="HOGENOM" id="CLU_038422_3_0_12"/>
<dbReference type="OrthoDB" id="9806637at2"/>
<dbReference type="Proteomes" id="UP000000611">
    <property type="component" value="Chromosome"/>
</dbReference>
<dbReference type="GO" id="GO:0005737">
    <property type="term" value="C:cytoplasm"/>
    <property type="evidence" value="ECO:0007669"/>
    <property type="project" value="UniProtKB-SubCell"/>
</dbReference>
<dbReference type="GO" id="GO:0071424">
    <property type="term" value="F:rRNA (cytosine-N4-)-methyltransferase activity"/>
    <property type="evidence" value="ECO:0007669"/>
    <property type="project" value="UniProtKB-UniRule"/>
</dbReference>
<dbReference type="GO" id="GO:0070475">
    <property type="term" value="P:rRNA base methylation"/>
    <property type="evidence" value="ECO:0007669"/>
    <property type="project" value="UniProtKB-UniRule"/>
</dbReference>
<dbReference type="Gene3D" id="1.10.150.170">
    <property type="entry name" value="Putative methyltransferase TM0872, insert domain"/>
    <property type="match status" value="1"/>
</dbReference>
<dbReference type="Gene3D" id="3.40.50.150">
    <property type="entry name" value="Vaccinia Virus protein VP39"/>
    <property type="match status" value="1"/>
</dbReference>
<dbReference type="HAMAP" id="MF_01007">
    <property type="entry name" value="16SrRNA_methyltr_H"/>
    <property type="match status" value="1"/>
</dbReference>
<dbReference type="InterPro" id="IPR002903">
    <property type="entry name" value="RsmH"/>
</dbReference>
<dbReference type="InterPro" id="IPR023397">
    <property type="entry name" value="SAM-dep_MeTrfase_MraW_recog"/>
</dbReference>
<dbReference type="InterPro" id="IPR029063">
    <property type="entry name" value="SAM-dependent_MTases_sf"/>
</dbReference>
<dbReference type="NCBIfam" id="TIGR00006">
    <property type="entry name" value="16S rRNA (cytosine(1402)-N(4))-methyltransferase RsmH"/>
    <property type="match status" value="1"/>
</dbReference>
<dbReference type="PANTHER" id="PTHR11265:SF0">
    <property type="entry name" value="12S RRNA N4-METHYLCYTIDINE METHYLTRANSFERASE"/>
    <property type="match status" value="1"/>
</dbReference>
<dbReference type="PANTHER" id="PTHR11265">
    <property type="entry name" value="S-ADENOSYL-METHYLTRANSFERASE MRAW"/>
    <property type="match status" value="1"/>
</dbReference>
<dbReference type="Pfam" id="PF01795">
    <property type="entry name" value="Methyltransf_5"/>
    <property type="match status" value="1"/>
</dbReference>
<dbReference type="PIRSF" id="PIRSF004486">
    <property type="entry name" value="MraW"/>
    <property type="match status" value="1"/>
</dbReference>
<dbReference type="SUPFAM" id="SSF81799">
    <property type="entry name" value="Putative methyltransferase TM0872, insert domain"/>
    <property type="match status" value="1"/>
</dbReference>
<dbReference type="SUPFAM" id="SSF53335">
    <property type="entry name" value="S-adenosyl-L-methionine-dependent methyltransferases"/>
    <property type="match status" value="1"/>
</dbReference>
<gene>
    <name evidence="1" type="primary">rsmH</name>
    <name type="synonym">mraW</name>
    <name type="ordered locus">BDU_309</name>
</gene>
<sequence length="297" mass="34518">MGDIFHIPVLLEDVINLVETIYLDDGFVFVDCTLGEGGHSKAVLSKYQNINVIGIERDDVVLNRAKESLVEFSKRISYSNTWFDDFFCKYSLHRRFNFILADLGISMFHYKVGGRGFSFLEDEKLDMRLFPSDGGISAYDIVNTFDKEMLENLIYELGGEYYSRRIVKAILEYRKINKIQTSRELQRIICKAYPNVKFKINPATKTFQALRIYVNDELDRLKRSLPLWIANLSKNGILAIITFHSLEDKIVKEFFKGLTKDQYCILTKKPITSSFKEKQYNNASRSAKLRAVKKLYE</sequence>
<keyword id="KW-0963">Cytoplasm</keyword>
<keyword id="KW-0489">Methyltransferase</keyword>
<keyword id="KW-0698">rRNA processing</keyword>
<keyword id="KW-0949">S-adenosyl-L-methionine</keyword>
<keyword id="KW-0808">Transferase</keyword>
<comment type="function">
    <text evidence="1">Specifically methylates the N4 position of cytidine in position 1402 (C1402) of 16S rRNA.</text>
</comment>
<comment type="catalytic activity">
    <reaction evidence="1">
        <text>cytidine(1402) in 16S rRNA + S-adenosyl-L-methionine = N(4)-methylcytidine(1402) in 16S rRNA + S-adenosyl-L-homocysteine + H(+)</text>
        <dbReference type="Rhea" id="RHEA:42928"/>
        <dbReference type="Rhea" id="RHEA-COMP:10286"/>
        <dbReference type="Rhea" id="RHEA-COMP:10287"/>
        <dbReference type="ChEBI" id="CHEBI:15378"/>
        <dbReference type="ChEBI" id="CHEBI:57856"/>
        <dbReference type="ChEBI" id="CHEBI:59789"/>
        <dbReference type="ChEBI" id="CHEBI:74506"/>
        <dbReference type="ChEBI" id="CHEBI:82748"/>
        <dbReference type="EC" id="2.1.1.199"/>
    </reaction>
</comment>
<comment type="subcellular location">
    <subcellularLocation>
        <location evidence="1">Cytoplasm</location>
    </subcellularLocation>
</comment>
<comment type="similarity">
    <text evidence="1">Belongs to the methyltransferase superfamily. RsmH family.</text>
</comment>
<reference key="1">
    <citation type="journal article" date="2008" name="PLoS Genet.">
        <title>The genome of Borrelia recurrentis, the agent of deadly louse-borne relapsing fever, is a degraded subset of tick-borne Borrelia duttonii.</title>
        <authorList>
            <person name="Lescot M."/>
            <person name="Audic S."/>
            <person name="Robert C."/>
            <person name="Nguyen T.T."/>
            <person name="Blanc G."/>
            <person name="Cutler S.J."/>
            <person name="Wincker P."/>
            <person name="Couloux A."/>
            <person name="Claverie J.-M."/>
            <person name="Raoult D."/>
            <person name="Drancourt M."/>
        </authorList>
    </citation>
    <scope>NUCLEOTIDE SEQUENCE [LARGE SCALE GENOMIC DNA]</scope>
    <source>
        <strain>Ly</strain>
    </source>
</reference>
<proteinExistence type="inferred from homology"/>
<name>RSMH_BORDL</name>
<organism>
    <name type="scientific">Borrelia duttonii (strain Ly)</name>
    <dbReference type="NCBI Taxonomy" id="412419"/>
    <lineage>
        <taxon>Bacteria</taxon>
        <taxon>Pseudomonadati</taxon>
        <taxon>Spirochaetota</taxon>
        <taxon>Spirochaetia</taxon>
        <taxon>Spirochaetales</taxon>
        <taxon>Borreliaceae</taxon>
        <taxon>Borrelia</taxon>
    </lineage>
</organism>
<protein>
    <recommendedName>
        <fullName evidence="1">Ribosomal RNA small subunit methyltransferase H</fullName>
        <ecNumber evidence="1">2.1.1.199</ecNumber>
    </recommendedName>
    <alternativeName>
        <fullName evidence="1">16S rRNA m(4)C1402 methyltransferase</fullName>
    </alternativeName>
    <alternativeName>
        <fullName evidence="1">rRNA (cytosine-N(4)-)-methyltransferase RsmH</fullName>
    </alternativeName>
</protein>
<accession>B5RLD2</accession>
<evidence type="ECO:0000255" key="1">
    <source>
        <dbReference type="HAMAP-Rule" id="MF_01007"/>
    </source>
</evidence>